<comment type="function">
    <text evidence="1 5">Carboxypeptidase that catalyzes the release of a C-terminal amino acid, but has little or no action with -Asp, -Glu, -Arg, -Lys or -Pro (By similarity). Catalyzes the conversion of leukotriene C4 to leukotriene F4 via the hydrolysis of an amide bond (PubMed:12729612).</text>
</comment>
<comment type="catalytic activity">
    <reaction evidence="1">
        <text>Release of a C-terminal amino acid, but little or no action with -Asp, -Glu, -Arg, -Lys or -Pro.</text>
        <dbReference type="EC" id="3.4.17.1"/>
    </reaction>
</comment>
<comment type="catalytic activity">
    <reaction evidence="5">
        <text>leukotriene C4 + H2O = leukotriene F4 + glycine</text>
        <dbReference type="Rhea" id="RHEA:50740"/>
        <dbReference type="ChEBI" id="CHEBI:15377"/>
        <dbReference type="ChEBI" id="CHEBI:57305"/>
        <dbReference type="ChEBI" id="CHEBI:57973"/>
        <dbReference type="ChEBI" id="CHEBI:133618"/>
    </reaction>
    <physiologicalReaction direction="left-to-right" evidence="5">
        <dbReference type="Rhea" id="RHEA:50741"/>
    </physiologicalReaction>
</comment>
<comment type="cofactor">
    <cofactor evidence="1">
        <name>Zn(2+)</name>
        <dbReference type="ChEBI" id="CHEBI:29105"/>
    </cofactor>
    <text evidence="1">Binds 1 zinc ion per subunit.</text>
</comment>
<comment type="activity regulation">
    <text evidence="6">Inhibited by interaction with the S.magnifica carboxypeptidase inhibitor SmCI.</text>
</comment>
<comment type="subunit">
    <text evidence="1">Monomer. May form a complex with proelastase 2.</text>
</comment>
<comment type="subcellular location">
    <subcellularLocation>
        <location evidence="2">Secreted</location>
    </subcellularLocation>
</comment>
<comment type="tissue specificity">
    <text evidence="10">Pancreas.</text>
</comment>
<comment type="similarity">
    <text evidence="11">Belongs to the peptidase M14 family.</text>
</comment>
<protein>
    <recommendedName>
        <fullName evidence="11">Carboxypeptidase A1</fullName>
        <ecNumber evidence="1">3.4.17.1</ecNumber>
    </recommendedName>
</protein>
<reference key="1">
    <citation type="journal article" date="1991" name="Biochem. Biophys. Res. Commun.">
        <title>Cloning and nucleotide sequence of a bovine pancreatic preprocarboxypeptidase A cDNA.</title>
        <authorList>
            <person name="le Hueerou I."/>
            <person name="Guilloteau P."/>
            <person name="Toullec R."/>
            <person name="Puigserver A."/>
            <person name="Wicker C."/>
        </authorList>
    </citation>
    <scope>NUCLEOTIDE SEQUENCE [MRNA]</scope>
    <source>
        <tissue>Pancreas</tissue>
    </source>
</reference>
<reference key="2">
    <citation type="journal article" date="1995" name="Gene">
        <title>Cloning, sequencing and expression of the gene encoding a major allotypic preprocarboxypeptidase A from bovine pancreas.</title>
        <authorList>
            <person name="Goo J.H."/>
            <person name="Kim K.H."/>
            <person name="Choi K.Y."/>
        </authorList>
    </citation>
    <scope>NUCLEOTIDE SEQUENCE [MRNA]</scope>
    <source>
        <tissue>Pancreas</tissue>
    </source>
</reference>
<reference key="3">
    <citation type="journal article" date="1971" name="Biochemistry">
        <title>Amino acid sequence of bovine carboxypeptidase A. Tryptic and chymotryptic peptides of the cyanogen bromide fragment F-I.</title>
        <authorList>
            <person name="Bradshaw R.A."/>
            <person name="Walsh K.A."/>
            <person name="Neurath H."/>
        </authorList>
    </citation>
    <scope>PROTEIN SEQUENCE OF 111-417</scope>
</reference>
<reference key="4">
    <citation type="journal article" date="1971" name="Biochemistry">
        <title>Characterization of bovine carboxypeptidase A (Allan).</title>
        <authorList>
            <person name="Petra P.H."/>
            <person name="Hermodson M.A."/>
            <person name="Walsh K.A."/>
            <person name="Neurath H."/>
        </authorList>
    </citation>
    <scope>SEQUENCE REVISION TO 138 AND 141</scope>
</reference>
<reference key="5">
    <citation type="journal article" date="1988" name="Biochimie">
        <title>The amino acid sequence of the activation peptide of bovine pro-carboxypeptidase A.</title>
        <authorList>
            <person name="Wade R.D."/>
            <person name="Hass G.M."/>
            <person name="Kumar S."/>
            <person name="Walsh K.A."/>
            <person name="Neurath H."/>
        </authorList>
    </citation>
    <scope>PROTEIN SEQUENCE OF 17-120</scope>
</reference>
<reference key="6">
    <citation type="journal article" date="2003" name="Arch. Biochem. Biophys.">
        <title>Carboxypeptidase A-catalyzed direct conversion of leukotriene C4 to leukotriene F4.</title>
        <authorList>
            <person name="Reddanna P."/>
            <person name="Prabhu K.S."/>
            <person name="Whelan J."/>
            <person name="Reddy C.C."/>
        </authorList>
    </citation>
    <scope>FUNCTION</scope>
    <scope>CATALYTIC ACTIVITY</scope>
</reference>
<reference key="7">
    <citation type="journal article" date="2013" name="Structure">
        <title>A noncanonical mechanism of carboxypeptidase inhibition revealed by the crystal structure of the Tri-Kunitz SmCI in complex with human CPA4.</title>
        <authorList>
            <person name="Alonso del Rivero M."/>
            <person name="Reytor M.L."/>
            <person name="Trejo S.A."/>
            <person name="Chavez M.A."/>
            <person name="Aviles F.X."/>
            <person name="Reverter D."/>
        </authorList>
    </citation>
    <scope>ACTIVITY REGULATION</scope>
</reference>
<reference key="8">
    <citation type="journal article" date="1983" name="J. Mol. Biol.">
        <title>Refined crystal structure of carboxypeptidase A at 1.54-A resolution.</title>
        <authorList>
            <person name="Rees D.C."/>
            <person name="Lewis M."/>
            <person name="Lipscomb W.N."/>
        </authorList>
    </citation>
    <scope>X-RAY CRYSTALLOGRAPHY (1.54 ANGSTROMS)</scope>
</reference>
<reference key="9">
    <citation type="journal article" date="1993" name="Acta Crystallogr. D">
        <title>High-resolution structure of the complex between carboxypeptidase A and L-phenyl lactate.</title>
        <authorList>
            <person name="Teplyakov A."/>
            <person name="Wilson K.S."/>
            <person name="Orioli P."/>
            <person name="Mangani S."/>
        </authorList>
    </citation>
    <scope>X-RAY CRYSTALLOGRAPHY (1.45 ANGSTROMS) OF 111-417 IN COMPLEX WITH ZINC IONS AND SUBSTRATE ANALOG</scope>
</reference>
<reference key="10">
    <citation type="journal article" date="1995" name="EMBO J.">
        <title>The three-dimensional structure of the native ternary complex of bovine pancreatic procarboxypeptidase A with proproteinase E and chymotrypsinogen C.</title>
        <authorList>
            <person name="Gomis-Rueth F.-X."/>
            <person name="Gomez M."/>
            <person name="Bode W."/>
            <person name="Huber R."/>
            <person name="Aviles F.X."/>
        </authorList>
    </citation>
    <scope>X-RAY CRYSTALLOGRAPHY (2.6 ANGSTROMS) OF COMPLEX WITH CPA1 AND CTRC</scope>
    <scope>TISSUE SPECIFICITY</scope>
</reference>
<reference key="11">
    <citation type="journal article" date="1998" name="Acta Crystallogr. D">
        <title>Carboxypeptidase A: native, zinc-removed and mercury-replaced forms.</title>
        <authorList>
            <person name="Greenblatt H.M."/>
            <person name="Feinberg H."/>
            <person name="Tucker P.A."/>
            <person name="Shoham G."/>
        </authorList>
    </citation>
    <scope>X-RAY CRYSTALLOGRAPHY (1.7 ANGSTROMS) OF 111-419 OF APOENZYME AND IN COMPLEX WITH ZINC IONS</scope>
</reference>
<reference key="12">
    <citation type="journal article" date="2000" name="Biochemistry">
        <title>Crystal structure of carboxypeptidase A complexed with D-cysteine at 1.75 A -- inhibitor-induced conformational changes.</title>
        <authorList>
            <person name="van Aalten D.M.F."/>
            <person name="Chong C.R."/>
            <person name="Joshua-Tor L."/>
        </authorList>
    </citation>
    <scope>X-RAY CRYSTALLOGRAPHY (1.75 ANGSTROMS) OF 111-417 IN COMPLEX WITH ZINC IONS AND INHIBITOR</scope>
</reference>
<reference key="13">
    <citation type="journal article" date="2002" name="Bioorg. Med. Chem.">
        <title>Insight into the stereochemistry in the inhibition of carboxypeptidase A with N-(hydroxyaminocarbonyl)phenylalanine: binding modes of an enantiomeric pair of the inhibitor to carboxypeptidase A.</title>
        <authorList>
            <person name="Cho J.H."/>
            <person name="Kim D.H."/>
            <person name="Chung S.J."/>
            <person name="Ha N.-C."/>
            <person name="Oh B.-H."/>
            <person name="Yong Choi K."/>
        </authorList>
    </citation>
    <scope>X-RAY CRYSTALLOGRAPHY (1.75 ANGSTROMS) OF 111-417 IN COMPLEX WITH ZINC IONS AND SUBSTRATE ANALOG</scope>
</reference>
<reference key="14">
    <citation type="journal article" date="2002" name="J. Med. Chem.">
        <title>Sulfamide-based inhibitors for carboxypeptidase A. Novel type transition state analogue inhibitors for zinc proteases.</title>
        <authorList>
            <person name="Park J.D."/>
            <person name="Kim D.H."/>
            <person name="Kim S.-J."/>
            <person name="Woo J.-R."/>
            <person name="Ryu S.E."/>
        </authorList>
    </citation>
    <scope>X-RAY CRYSTALLOGRAPHY (2.0 ANGSTROMS) OF 111-417 IN COMPLEX WITH ZINC IONS AND SUBSTRATE ANALOG</scope>
</reference>
<reference key="15">
    <citation type="journal article" date="2003" name="Acta Crystallogr. D">
        <title>Refined structure of bovine carboxypeptidase A at 1.25 A resolution.</title>
        <authorList>
            <person name="Kilshtain-Vardi A."/>
            <person name="Glick M."/>
            <person name="Greenblatt H.M."/>
            <person name="Goldblum A."/>
            <person name="Shoham G."/>
        </authorList>
    </citation>
    <scope>X-RAY CRYSTALLOGRAPHY (1.25 ANGSTROMS) OF 111-417 IN COMPLEX WITH ZINC IONS</scope>
</reference>
<reference key="16">
    <citation type="journal article" date="1969" name="Biochemistry">
        <title>Identification of the amino acid replacements characterizing the allotypic forms of bovine carboxypeptidase A.</title>
        <authorList>
            <person name="Petra P.H."/>
            <person name="Bradshaw R.A."/>
            <person name="Walsh K.A."/>
            <person name="Neurath H."/>
        </authorList>
    </citation>
    <scope>VARIANTS ALLELIC VAL-289; ALA-338 AND VAL-415</scope>
</reference>
<organism>
    <name type="scientific">Bos taurus</name>
    <name type="common">Bovine</name>
    <dbReference type="NCBI Taxonomy" id="9913"/>
    <lineage>
        <taxon>Eukaryota</taxon>
        <taxon>Metazoa</taxon>
        <taxon>Chordata</taxon>
        <taxon>Craniata</taxon>
        <taxon>Vertebrata</taxon>
        <taxon>Euteleostomi</taxon>
        <taxon>Mammalia</taxon>
        <taxon>Eutheria</taxon>
        <taxon>Laurasiatheria</taxon>
        <taxon>Artiodactyla</taxon>
        <taxon>Ruminantia</taxon>
        <taxon>Pecora</taxon>
        <taxon>Bovidae</taxon>
        <taxon>Bovinae</taxon>
        <taxon>Bos</taxon>
    </lineage>
</organism>
<gene>
    <name type="primary">CPA1</name>
    <name type="synonym">CPA</name>
</gene>
<accession>P00730</accession>
<feature type="signal peptide" evidence="7">
    <location>
        <begin position="1"/>
        <end position="16"/>
    </location>
</feature>
<feature type="propeptide" id="PRO_0000004343" description="Activation peptide" evidence="8">
    <location>
        <begin position="17"/>
        <end position="110"/>
    </location>
</feature>
<feature type="chain" id="PRO_0000004344" description="Carboxypeptidase A1">
    <location>
        <begin position="111"/>
        <end position="419"/>
    </location>
</feature>
<feature type="domain" description="Peptidase M14" evidence="3">
    <location>
        <begin position="121"/>
        <end position="414"/>
    </location>
</feature>
<feature type="active site" description="Proton donor/acceptor" evidence="3">
    <location>
        <position position="380"/>
    </location>
</feature>
<feature type="binding site" evidence="4 12">
    <location>
        <begin position="179"/>
        <end position="182"/>
    </location>
    <ligand>
        <name>substrate</name>
    </ligand>
</feature>
<feature type="binding site" evidence="3 4 12">
    <location>
        <position position="179"/>
    </location>
    <ligand>
        <name>Zn(2+)</name>
        <dbReference type="ChEBI" id="CHEBI:29105"/>
        <note>catalytic</note>
    </ligand>
</feature>
<feature type="binding site" evidence="3 4 12">
    <location>
        <position position="182"/>
    </location>
    <ligand>
        <name>Zn(2+)</name>
        <dbReference type="ChEBI" id="CHEBI:29105"/>
        <note>catalytic</note>
    </ligand>
</feature>
<feature type="binding site" evidence="4 12">
    <location>
        <position position="237"/>
    </location>
    <ligand>
        <name>substrate</name>
    </ligand>
</feature>
<feature type="binding site" evidence="4 12">
    <location>
        <begin position="254"/>
        <end position="255"/>
    </location>
    <ligand>
        <name>substrate</name>
    </ligand>
</feature>
<feature type="binding site" evidence="3 4 12">
    <location>
        <position position="306"/>
    </location>
    <ligand>
        <name>Zn(2+)</name>
        <dbReference type="ChEBI" id="CHEBI:29105"/>
        <note>catalytic</note>
    </ligand>
</feature>
<feature type="binding site" evidence="4 12">
    <location>
        <begin position="307"/>
        <end position="308"/>
    </location>
    <ligand>
        <name>substrate</name>
    </ligand>
</feature>
<feature type="binding site" evidence="4 12">
    <location>
        <position position="358"/>
    </location>
    <ligand>
        <name>substrate</name>
    </ligand>
</feature>
<feature type="disulfide bond" evidence="1">
    <location>
        <begin position="248"/>
        <end position="271"/>
    </location>
</feature>
<feature type="sequence variant" description="In allelic variant." evidence="9">
    <original>I</original>
    <variation>V</variation>
    <location>
        <position position="289"/>
    </location>
</feature>
<feature type="sequence variant" description="In allelic variant." evidence="9">
    <original>E</original>
    <variation>A</variation>
    <location>
        <position position="338"/>
    </location>
</feature>
<feature type="sequence variant" description="In allelic variant." evidence="9">
    <original>L</original>
    <variation>V</variation>
    <location>
        <position position="415"/>
    </location>
</feature>
<feature type="sequence conflict" description="In Ref. 5; AA sequence." evidence="11" ref="5">
    <original>S</original>
    <variation>L</variation>
    <location>
        <position position="95"/>
    </location>
</feature>
<feature type="sequence conflict" description="In Ref. 3; AA sequence." evidence="11" ref="3">
    <original>D</original>
    <variation>N</variation>
    <location>
        <position position="199"/>
    </location>
</feature>
<feature type="sequence conflict" description="In Ref. 3; AA sequence." evidence="11" ref="3">
    <original>D</original>
    <variation>N</variation>
    <location>
        <position position="203"/>
    </location>
</feature>
<feature type="sequence conflict" description="In Ref. 3; AA sequence." evidence="11" ref="3">
    <original>D</original>
    <variation>N</variation>
    <location>
        <position position="224"/>
    </location>
</feature>
<feature type="sequence conflict" description="In Ref. 3; AA sequence." evidence="11" ref="3">
    <original>Q</original>
    <variation>E</variation>
    <location>
        <position position="232"/>
    </location>
</feature>
<feature type="sequence conflict" description="In Ref. 3; AA sequence." evidence="11" ref="3">
    <original>D</original>
    <variation>N</variation>
    <location>
        <position position="295"/>
    </location>
</feature>
<feature type="strand" evidence="15">
    <location>
        <begin position="24"/>
        <end position="29"/>
    </location>
</feature>
<feature type="helix" evidence="15">
    <location>
        <begin position="33"/>
        <end position="40"/>
    </location>
</feature>
<feature type="turn" evidence="15">
    <location>
        <begin position="41"/>
        <end position="43"/>
    </location>
</feature>
<feature type="helix" evidence="15">
    <location>
        <begin position="46"/>
        <end position="48"/>
    </location>
</feature>
<feature type="strand" evidence="15">
    <location>
        <begin position="51"/>
        <end position="54"/>
    </location>
</feature>
<feature type="strand" evidence="15">
    <location>
        <begin position="63"/>
        <end position="67"/>
    </location>
</feature>
<feature type="helix" evidence="15">
    <location>
        <begin position="69"/>
        <end position="81"/>
    </location>
</feature>
<feature type="strand" evidence="15">
    <location>
        <begin position="85"/>
        <end position="91"/>
    </location>
</feature>
<feature type="helix" evidence="15">
    <location>
        <begin position="93"/>
        <end position="106"/>
    </location>
</feature>
<feature type="turn" evidence="14">
    <location>
        <begin position="114"/>
        <end position="116"/>
    </location>
</feature>
<feature type="strand" evidence="13">
    <location>
        <begin position="119"/>
        <end position="121"/>
    </location>
</feature>
<feature type="helix" evidence="14">
    <location>
        <begin position="125"/>
        <end position="138"/>
    </location>
</feature>
<feature type="turn" evidence="14">
    <location>
        <begin position="140"/>
        <end position="142"/>
    </location>
</feature>
<feature type="strand" evidence="14">
    <location>
        <begin position="143"/>
        <end position="150"/>
    </location>
</feature>
<feature type="strand" evidence="14">
    <location>
        <begin position="156"/>
        <end position="162"/>
    </location>
</feature>
<feature type="strand" evidence="16">
    <location>
        <begin position="164"/>
        <end position="168"/>
    </location>
</feature>
<feature type="strand" evidence="14">
    <location>
        <begin position="171"/>
        <end position="176"/>
    </location>
</feature>
<feature type="helix" evidence="14">
    <location>
        <begin position="183"/>
        <end position="199"/>
    </location>
</feature>
<feature type="turn" evidence="14">
    <location>
        <begin position="200"/>
        <end position="202"/>
    </location>
</feature>
<feature type="helix" evidence="14">
    <location>
        <begin position="204"/>
        <end position="212"/>
    </location>
</feature>
<feature type="strand" evidence="14">
    <location>
        <begin position="214"/>
        <end position="219"/>
    </location>
</feature>
<feature type="helix" evidence="14">
    <location>
        <begin position="223"/>
        <end position="231"/>
    </location>
</feature>
<feature type="strand" evidence="13">
    <location>
        <begin position="244"/>
        <end position="247"/>
    </location>
</feature>
<feature type="helix" evidence="14">
    <location>
        <begin position="253"/>
        <end position="255"/>
    </location>
</feature>
<feature type="strand" evidence="14">
    <location>
        <begin position="257"/>
        <end position="260"/>
    </location>
</feature>
<feature type="strand" evidence="14">
    <location>
        <begin position="263"/>
        <end position="267"/>
    </location>
</feature>
<feature type="strand" evidence="18">
    <location>
        <begin position="273"/>
        <end position="275"/>
    </location>
</feature>
<feature type="helix" evidence="14">
    <location>
        <begin position="284"/>
        <end position="296"/>
    </location>
</feature>
<feature type="strand" evidence="14">
    <location>
        <begin position="299"/>
        <end position="306"/>
    </location>
</feature>
<feature type="strand" evidence="14">
    <location>
        <begin position="311"/>
        <end position="315"/>
    </location>
</feature>
<feature type="helix" evidence="14">
    <location>
        <begin position="326"/>
        <end position="341"/>
    </location>
</feature>
<feature type="turn" evidence="14">
    <location>
        <begin position="342"/>
        <end position="344"/>
    </location>
</feature>
<feature type="strand" evidence="14">
    <location>
        <begin position="349"/>
        <end position="352"/>
    </location>
</feature>
<feature type="helix" evidence="14">
    <location>
        <begin position="353"/>
        <end position="356"/>
    </location>
</feature>
<feature type="helix" evidence="14">
    <location>
        <begin position="364"/>
        <end position="370"/>
    </location>
</feature>
<feature type="strand" evidence="14">
    <location>
        <begin position="375"/>
        <end position="380"/>
    </location>
</feature>
<feature type="strand" evidence="14">
    <location>
        <begin position="384"/>
        <end position="387"/>
    </location>
</feature>
<feature type="helix" evidence="17">
    <location>
        <begin position="388"/>
        <end position="390"/>
    </location>
</feature>
<feature type="helix" evidence="14">
    <location>
        <begin position="393"/>
        <end position="395"/>
    </location>
</feature>
<feature type="helix" evidence="14">
    <location>
        <begin position="396"/>
        <end position="416"/>
    </location>
</feature>
<sequence length="419" mass="47082">MQGLLILSVLLGAALGKEDFVGHQVLRITAADEAEVQTVKELEDLEHLQLDFWRGPGQPGSPIDVRVPFPSLQAVKVFLEAHGIRYRIMIEDVQSLLDEEQEQMFASQSRARSTNTFNYATYHTLDEIYDFMDLLVAEHPQLVSKLQIGRSYEGRPIYVLKFSTGGSNRPAIWIDLGIHSREWITQATGVWFAKKFTEDYGQDPSFTAILDSMDIFLEIVTNPDGFAFTHSQNRLWRKTRSVTSSSLCVGVDANRNWDAGFGKAGASSSPCSETYHGKYANSEVEVKSIVDFVKDHGNFKAFLSIHSYSQLLLYPYGYTTQSIPDKTELNQVAKSAVEALKSLYGTSYKYGSIITTIYQASGGSIDWSYNQGIKYSFTFELRDTGRYGFLLPASQIIPTAQETWLGVLTIMEHTLNNLY</sequence>
<dbReference type="EC" id="3.4.17.1" evidence="1"/>
<dbReference type="EMBL" id="M61851">
    <property type="protein sequence ID" value="AAA30426.1"/>
    <property type="molecule type" value="mRNA"/>
</dbReference>
<dbReference type="EMBL" id="Z33906">
    <property type="protein sequence ID" value="CAA83955.1"/>
    <property type="molecule type" value="mRNA"/>
</dbReference>
<dbReference type="PIR" id="JN0126">
    <property type="entry name" value="CPBOA"/>
</dbReference>
<dbReference type="RefSeq" id="NP_777175.1">
    <property type="nucleotide sequence ID" value="NM_174750.2"/>
</dbReference>
<dbReference type="PDB" id="1ARL">
    <property type="method" value="X-ray"/>
    <property type="resolution" value="1.88 A"/>
    <property type="chains" value="A=111-417"/>
</dbReference>
<dbReference type="PDB" id="1ARM">
    <property type="method" value="X-ray"/>
    <property type="resolution" value="1.76 A"/>
    <property type="chains" value="A=111-419"/>
</dbReference>
<dbReference type="PDB" id="1BAV">
    <property type="method" value="X-ray"/>
    <property type="resolution" value="1.60 A"/>
    <property type="chains" value="A/B/C/D=111-419"/>
</dbReference>
<dbReference type="PDB" id="1CBX">
    <property type="method" value="X-ray"/>
    <property type="resolution" value="2.00 A"/>
    <property type="chains" value="A=111-417"/>
</dbReference>
<dbReference type="PDB" id="1CPS">
    <property type="method" value="X-ray"/>
    <property type="resolution" value="2.25 A"/>
    <property type="chains" value="A=111-417"/>
</dbReference>
<dbReference type="PDB" id="1CPX">
    <property type="method" value="X-ray"/>
    <property type="resolution" value="2.00 A"/>
    <property type="chains" value="A=111-417"/>
</dbReference>
<dbReference type="PDB" id="1EE3">
    <property type="method" value="X-ray"/>
    <property type="resolution" value="1.70 A"/>
    <property type="chains" value="P=111-419"/>
</dbReference>
<dbReference type="PDB" id="1ELL">
    <property type="method" value="X-ray"/>
    <property type="resolution" value="1.76 A"/>
    <property type="chains" value="P=111-419"/>
</dbReference>
<dbReference type="PDB" id="1ELM">
    <property type="method" value="X-ray"/>
    <property type="resolution" value="2.00 A"/>
    <property type="chains" value="P=111-419"/>
</dbReference>
<dbReference type="PDB" id="1F57">
    <property type="method" value="X-ray"/>
    <property type="resolution" value="1.75 A"/>
    <property type="chains" value="A=111-417"/>
</dbReference>
<dbReference type="PDB" id="1HDQ">
    <property type="method" value="X-ray"/>
    <property type="resolution" value="2.30 A"/>
    <property type="chains" value="A=111-417"/>
</dbReference>
<dbReference type="PDB" id="1HDU">
    <property type="method" value="X-ray"/>
    <property type="resolution" value="1.75 A"/>
    <property type="chains" value="A/B/D/E=111-414"/>
</dbReference>
<dbReference type="PDB" id="1HEE">
    <property type="method" value="X-ray"/>
    <property type="resolution" value="1.75 A"/>
    <property type="chains" value="A/B/D/E=111-414"/>
</dbReference>
<dbReference type="PDB" id="1IY7">
    <property type="method" value="X-ray"/>
    <property type="resolution" value="2.00 A"/>
    <property type="chains" value="A=111-417"/>
</dbReference>
<dbReference type="PDB" id="1M4L">
    <property type="method" value="X-ray"/>
    <property type="resolution" value="1.25 A"/>
    <property type="chains" value="A=111-417"/>
</dbReference>
<dbReference type="PDB" id="1PYT">
    <property type="method" value="X-ray"/>
    <property type="resolution" value="2.35 A"/>
    <property type="chains" value="A=17-110, B=111-419"/>
</dbReference>
<dbReference type="PDB" id="1YME">
    <property type="method" value="X-ray"/>
    <property type="resolution" value="1.53 A"/>
    <property type="chains" value="A=111-419"/>
</dbReference>
<dbReference type="PDB" id="1ZLH">
    <property type="method" value="X-ray"/>
    <property type="resolution" value="1.70 A"/>
    <property type="chains" value="A=111-419"/>
</dbReference>
<dbReference type="PDB" id="2ABZ">
    <property type="method" value="X-ray"/>
    <property type="resolution" value="2.16 A"/>
    <property type="chains" value="A/B=111-419"/>
</dbReference>
<dbReference type="PDB" id="2CTB">
    <property type="method" value="X-ray"/>
    <property type="resolution" value="1.50 A"/>
    <property type="chains" value="A=111-417"/>
</dbReference>
<dbReference type="PDB" id="2CTC">
    <property type="method" value="X-ray"/>
    <property type="resolution" value="1.40 A"/>
    <property type="chains" value="A=111-417"/>
</dbReference>
<dbReference type="PDB" id="2RFH">
    <property type="method" value="X-ray"/>
    <property type="resolution" value="1.70 A"/>
    <property type="chains" value="A=111-417"/>
</dbReference>
<dbReference type="PDB" id="3CPA">
    <property type="method" value="X-ray"/>
    <property type="resolution" value="2.00 A"/>
    <property type="chains" value="A=111-417"/>
</dbReference>
<dbReference type="PDB" id="3FVL">
    <property type="method" value="X-ray"/>
    <property type="resolution" value="1.85 A"/>
    <property type="chains" value="A/C/E=111-417"/>
</dbReference>
<dbReference type="PDB" id="3FX6">
    <property type="method" value="X-ray"/>
    <property type="resolution" value="1.85 A"/>
    <property type="chains" value="A/C/E=111-417"/>
</dbReference>
<dbReference type="PDB" id="3I1U">
    <property type="method" value="X-ray"/>
    <property type="resolution" value="1.39 A"/>
    <property type="chains" value="A=111-419"/>
</dbReference>
<dbReference type="PDB" id="3KGQ">
    <property type="method" value="X-ray"/>
    <property type="resolution" value="1.70 A"/>
    <property type="chains" value="A=111-419"/>
</dbReference>
<dbReference type="PDB" id="4CPA">
    <property type="method" value="X-ray"/>
    <property type="resolution" value="2.50 A"/>
    <property type="chains" value="A/B=111-417"/>
</dbReference>
<dbReference type="PDB" id="5CPA">
    <property type="method" value="X-ray"/>
    <property type="resolution" value="1.54 A"/>
    <property type="chains" value="A=111-417"/>
</dbReference>
<dbReference type="PDB" id="6CPA">
    <property type="method" value="X-ray"/>
    <property type="resolution" value="2.00 A"/>
    <property type="chains" value="A=111-417"/>
</dbReference>
<dbReference type="PDB" id="7CPA">
    <property type="method" value="X-ray"/>
    <property type="resolution" value="2.00 A"/>
    <property type="chains" value="A=111-417"/>
</dbReference>
<dbReference type="PDB" id="8CPA">
    <property type="method" value="X-ray"/>
    <property type="resolution" value="2.00 A"/>
    <property type="chains" value="A=111-417"/>
</dbReference>
<dbReference type="PDBsum" id="1ARL"/>
<dbReference type="PDBsum" id="1ARM"/>
<dbReference type="PDBsum" id="1BAV"/>
<dbReference type="PDBsum" id="1CBX"/>
<dbReference type="PDBsum" id="1CPS"/>
<dbReference type="PDBsum" id="1CPX"/>
<dbReference type="PDBsum" id="1EE3"/>
<dbReference type="PDBsum" id="1ELL"/>
<dbReference type="PDBsum" id="1ELM"/>
<dbReference type="PDBsum" id="1F57"/>
<dbReference type="PDBsum" id="1HDQ"/>
<dbReference type="PDBsum" id="1HDU"/>
<dbReference type="PDBsum" id="1HEE"/>
<dbReference type="PDBsum" id="1IY7"/>
<dbReference type="PDBsum" id="1M4L"/>
<dbReference type="PDBsum" id="1PYT"/>
<dbReference type="PDBsum" id="1YME"/>
<dbReference type="PDBsum" id="1ZLH"/>
<dbReference type="PDBsum" id="2ABZ"/>
<dbReference type="PDBsum" id="2CTB"/>
<dbReference type="PDBsum" id="2CTC"/>
<dbReference type="PDBsum" id="2RFH"/>
<dbReference type="PDBsum" id="3CPA"/>
<dbReference type="PDBsum" id="3FVL"/>
<dbReference type="PDBsum" id="3FX6"/>
<dbReference type="PDBsum" id="3I1U"/>
<dbReference type="PDBsum" id="3KGQ"/>
<dbReference type="PDBsum" id="4CPA"/>
<dbReference type="PDBsum" id="5CPA"/>
<dbReference type="PDBsum" id="6CPA"/>
<dbReference type="PDBsum" id="7CPA"/>
<dbReference type="PDBsum" id="8CPA"/>
<dbReference type="PCDDB" id="P00730"/>
<dbReference type="SMR" id="P00730"/>
<dbReference type="DIP" id="DIP-44716N"/>
<dbReference type="FunCoup" id="P00730">
    <property type="interactions" value="195"/>
</dbReference>
<dbReference type="IntAct" id="P00730">
    <property type="interactions" value="1"/>
</dbReference>
<dbReference type="MINT" id="P00730"/>
<dbReference type="STRING" id="9913.ENSBTAP00000009745"/>
<dbReference type="BindingDB" id="P00730"/>
<dbReference type="ChEMBL" id="CHEMBL3481"/>
<dbReference type="SwissLipids" id="SLP:000001634"/>
<dbReference type="MEROPS" id="M14.001"/>
<dbReference type="PaxDb" id="9913-ENSBTAP00000009745"/>
<dbReference type="GeneID" id="286762"/>
<dbReference type="KEGG" id="bta:286762"/>
<dbReference type="CTD" id="1357"/>
<dbReference type="eggNOG" id="KOG2650">
    <property type="taxonomic scope" value="Eukaryota"/>
</dbReference>
<dbReference type="InParanoid" id="P00730"/>
<dbReference type="OrthoDB" id="3626597at2759"/>
<dbReference type="BRENDA" id="3.4.17.1">
    <property type="organism ID" value="908"/>
</dbReference>
<dbReference type="SABIO-RK" id="P00730"/>
<dbReference type="EvolutionaryTrace" id="P00730"/>
<dbReference type="PRO" id="PR:P00730"/>
<dbReference type="Proteomes" id="UP000009136">
    <property type="component" value="Unplaced"/>
</dbReference>
<dbReference type="GO" id="GO:0005615">
    <property type="term" value="C:extracellular space"/>
    <property type="evidence" value="ECO:0000318"/>
    <property type="project" value="GO_Central"/>
</dbReference>
<dbReference type="GO" id="GO:0004181">
    <property type="term" value="F:metallocarboxypeptidase activity"/>
    <property type="evidence" value="ECO:0000250"/>
    <property type="project" value="UniProtKB"/>
</dbReference>
<dbReference type="GO" id="GO:0008270">
    <property type="term" value="F:zinc ion binding"/>
    <property type="evidence" value="ECO:0007669"/>
    <property type="project" value="InterPro"/>
</dbReference>
<dbReference type="GO" id="GO:0006691">
    <property type="term" value="P:leukotriene metabolic process"/>
    <property type="evidence" value="ECO:0000314"/>
    <property type="project" value="UniProtKB"/>
</dbReference>
<dbReference type="GO" id="GO:0006508">
    <property type="term" value="P:proteolysis"/>
    <property type="evidence" value="ECO:0000318"/>
    <property type="project" value="GO_Central"/>
</dbReference>
<dbReference type="CDD" id="cd03870">
    <property type="entry name" value="M14_CPA"/>
    <property type="match status" value="1"/>
</dbReference>
<dbReference type="FunFam" id="3.40.630.10:FF:000132">
    <property type="entry name" value="Carboxypeptidase A1"/>
    <property type="match status" value="1"/>
</dbReference>
<dbReference type="FunFam" id="3.30.70.340:FF:000001">
    <property type="entry name" value="Carboxypeptidase A5"/>
    <property type="match status" value="1"/>
</dbReference>
<dbReference type="Gene3D" id="3.30.70.340">
    <property type="entry name" value="Metallocarboxypeptidase-like"/>
    <property type="match status" value="1"/>
</dbReference>
<dbReference type="Gene3D" id="3.40.630.10">
    <property type="entry name" value="Zn peptidases"/>
    <property type="match status" value="1"/>
</dbReference>
<dbReference type="InterPro" id="IPR034248">
    <property type="entry name" value="CPA_M14_CPD"/>
</dbReference>
<dbReference type="InterPro" id="IPR036990">
    <property type="entry name" value="M14A-like_propep"/>
</dbReference>
<dbReference type="InterPro" id="IPR003146">
    <property type="entry name" value="M14A_act_pep"/>
</dbReference>
<dbReference type="InterPro" id="IPR000834">
    <property type="entry name" value="Peptidase_M14"/>
</dbReference>
<dbReference type="PANTHER" id="PTHR11705:SF94">
    <property type="entry name" value="CARBOXYPEPTIDASE A1"/>
    <property type="match status" value="1"/>
</dbReference>
<dbReference type="PANTHER" id="PTHR11705">
    <property type="entry name" value="PROTEASE FAMILY M14 CARBOXYPEPTIDASE A,B"/>
    <property type="match status" value="1"/>
</dbReference>
<dbReference type="Pfam" id="PF00246">
    <property type="entry name" value="Peptidase_M14"/>
    <property type="match status" value="1"/>
</dbReference>
<dbReference type="Pfam" id="PF02244">
    <property type="entry name" value="Propep_M14"/>
    <property type="match status" value="1"/>
</dbReference>
<dbReference type="PRINTS" id="PR00765">
    <property type="entry name" value="CRBOXYPTASEA"/>
</dbReference>
<dbReference type="SMART" id="SM00631">
    <property type="entry name" value="Zn_pept"/>
    <property type="match status" value="1"/>
</dbReference>
<dbReference type="SUPFAM" id="SSF54897">
    <property type="entry name" value="Protease propeptides/inhibitors"/>
    <property type="match status" value="1"/>
</dbReference>
<dbReference type="SUPFAM" id="SSF53187">
    <property type="entry name" value="Zn-dependent exopeptidases"/>
    <property type="match status" value="1"/>
</dbReference>
<dbReference type="PROSITE" id="PS00132">
    <property type="entry name" value="CARBOXYPEPT_ZN_1"/>
    <property type="match status" value="1"/>
</dbReference>
<dbReference type="PROSITE" id="PS00133">
    <property type="entry name" value="CARBOXYPEPT_ZN_2"/>
    <property type="match status" value="1"/>
</dbReference>
<dbReference type="PROSITE" id="PS52035">
    <property type="entry name" value="PEPTIDASE_M14"/>
    <property type="match status" value="1"/>
</dbReference>
<proteinExistence type="evidence at protein level"/>
<evidence type="ECO:0000250" key="1">
    <source>
        <dbReference type="UniProtKB" id="P15085"/>
    </source>
</evidence>
<evidence type="ECO:0000250" key="2">
    <source>
        <dbReference type="UniProtKB" id="Q9UI42"/>
    </source>
</evidence>
<evidence type="ECO:0000255" key="3">
    <source>
        <dbReference type="PROSITE-ProRule" id="PRU01379"/>
    </source>
</evidence>
<evidence type="ECO:0000269" key="4">
    <source>
    </source>
</evidence>
<evidence type="ECO:0000269" key="5">
    <source>
    </source>
</evidence>
<evidence type="ECO:0000269" key="6">
    <source>
    </source>
</evidence>
<evidence type="ECO:0000269" key="7">
    <source>
    </source>
</evidence>
<evidence type="ECO:0000269" key="8">
    <source>
    </source>
</evidence>
<evidence type="ECO:0000269" key="9">
    <source>
    </source>
</evidence>
<evidence type="ECO:0000269" key="10">
    <source>
    </source>
</evidence>
<evidence type="ECO:0000305" key="11"/>
<evidence type="ECO:0007744" key="12">
    <source>
        <dbReference type="PDB" id="1IY7"/>
    </source>
</evidence>
<evidence type="ECO:0007829" key="13">
    <source>
        <dbReference type="PDB" id="1BAV"/>
    </source>
</evidence>
<evidence type="ECO:0007829" key="14">
    <source>
        <dbReference type="PDB" id="1M4L"/>
    </source>
</evidence>
<evidence type="ECO:0007829" key="15">
    <source>
        <dbReference type="PDB" id="1PYT"/>
    </source>
</evidence>
<evidence type="ECO:0007829" key="16">
    <source>
        <dbReference type="PDB" id="3FVL"/>
    </source>
</evidence>
<evidence type="ECO:0007829" key="17">
    <source>
        <dbReference type="PDB" id="3I1U"/>
    </source>
</evidence>
<evidence type="ECO:0007829" key="18">
    <source>
        <dbReference type="PDB" id="4CPA"/>
    </source>
</evidence>
<keyword id="KW-0002">3D-structure</keyword>
<keyword id="KW-0121">Carboxypeptidase</keyword>
<keyword id="KW-0903">Direct protein sequencing</keyword>
<keyword id="KW-1015">Disulfide bond</keyword>
<keyword id="KW-0378">Hydrolase</keyword>
<keyword id="KW-0479">Metal-binding</keyword>
<keyword id="KW-0482">Metalloprotease</keyword>
<keyword id="KW-0645">Protease</keyword>
<keyword id="KW-1185">Reference proteome</keyword>
<keyword id="KW-0964">Secreted</keyword>
<keyword id="KW-0732">Signal</keyword>
<keyword id="KW-0862">Zinc</keyword>
<keyword id="KW-0865">Zymogen</keyword>
<name>CBPA1_BOVIN</name>